<keyword id="KW-0963">Cytoplasm</keyword>
<keyword id="KW-0489">Methyltransferase</keyword>
<keyword id="KW-0698">rRNA processing</keyword>
<keyword id="KW-0949">S-adenosyl-L-methionine</keyword>
<keyword id="KW-0808">Transferase</keyword>
<dbReference type="EC" id="2.1.1.198" evidence="1"/>
<dbReference type="EMBL" id="AE013218">
    <property type="protein sequence ID" value="AAM67653.1"/>
    <property type="molecule type" value="Genomic_DNA"/>
</dbReference>
<dbReference type="RefSeq" id="WP_011053619.1">
    <property type="nucleotide sequence ID" value="NC_004061.1"/>
</dbReference>
<dbReference type="SMR" id="Q8KA29"/>
<dbReference type="STRING" id="198804.BUsg_083"/>
<dbReference type="GeneID" id="93003551"/>
<dbReference type="KEGG" id="bas:BUsg_083"/>
<dbReference type="eggNOG" id="COG0313">
    <property type="taxonomic scope" value="Bacteria"/>
</dbReference>
<dbReference type="HOGENOM" id="CLU_044779_1_0_6"/>
<dbReference type="Proteomes" id="UP000000416">
    <property type="component" value="Chromosome"/>
</dbReference>
<dbReference type="GO" id="GO:0005737">
    <property type="term" value="C:cytoplasm"/>
    <property type="evidence" value="ECO:0007669"/>
    <property type="project" value="UniProtKB-SubCell"/>
</dbReference>
<dbReference type="GO" id="GO:0070677">
    <property type="term" value="F:rRNA (cytosine-2'-O-)-methyltransferase activity"/>
    <property type="evidence" value="ECO:0007669"/>
    <property type="project" value="UniProtKB-UniRule"/>
</dbReference>
<dbReference type="CDD" id="cd11648">
    <property type="entry name" value="RsmI"/>
    <property type="match status" value="1"/>
</dbReference>
<dbReference type="FunFam" id="3.30.950.10:FF:000002">
    <property type="entry name" value="Ribosomal RNA small subunit methyltransferase I"/>
    <property type="match status" value="1"/>
</dbReference>
<dbReference type="Gene3D" id="3.40.1010.10">
    <property type="entry name" value="Cobalt-precorrin-4 Transmethylase, Domain 1"/>
    <property type="match status" value="1"/>
</dbReference>
<dbReference type="Gene3D" id="3.30.950.10">
    <property type="entry name" value="Methyltransferase, Cobalt-precorrin-4 Transmethylase, Domain 2"/>
    <property type="match status" value="1"/>
</dbReference>
<dbReference type="HAMAP" id="MF_01877">
    <property type="entry name" value="16SrRNA_methyltr_I"/>
    <property type="match status" value="1"/>
</dbReference>
<dbReference type="InterPro" id="IPR000878">
    <property type="entry name" value="4pyrrol_Mease"/>
</dbReference>
<dbReference type="InterPro" id="IPR035996">
    <property type="entry name" value="4pyrrol_Methylase_sf"/>
</dbReference>
<dbReference type="InterPro" id="IPR014777">
    <property type="entry name" value="4pyrrole_Mease_sub1"/>
</dbReference>
<dbReference type="InterPro" id="IPR014776">
    <property type="entry name" value="4pyrrole_Mease_sub2"/>
</dbReference>
<dbReference type="InterPro" id="IPR008189">
    <property type="entry name" value="rRNA_ssu_MeTfrase_I"/>
</dbReference>
<dbReference type="InterPro" id="IPR018063">
    <property type="entry name" value="SAM_MeTrfase_RsmI_CS"/>
</dbReference>
<dbReference type="NCBIfam" id="TIGR00096">
    <property type="entry name" value="16S rRNA (cytidine(1402)-2'-O)-methyltransferase"/>
    <property type="match status" value="1"/>
</dbReference>
<dbReference type="PANTHER" id="PTHR46111">
    <property type="entry name" value="RIBOSOMAL RNA SMALL SUBUNIT METHYLTRANSFERASE I"/>
    <property type="match status" value="1"/>
</dbReference>
<dbReference type="PANTHER" id="PTHR46111:SF1">
    <property type="entry name" value="RIBOSOMAL RNA SMALL SUBUNIT METHYLTRANSFERASE I"/>
    <property type="match status" value="1"/>
</dbReference>
<dbReference type="Pfam" id="PF00590">
    <property type="entry name" value="TP_methylase"/>
    <property type="match status" value="1"/>
</dbReference>
<dbReference type="PIRSF" id="PIRSF005917">
    <property type="entry name" value="MTase_YraL"/>
    <property type="match status" value="1"/>
</dbReference>
<dbReference type="SUPFAM" id="SSF53790">
    <property type="entry name" value="Tetrapyrrole methylase"/>
    <property type="match status" value="1"/>
</dbReference>
<dbReference type="PROSITE" id="PS01296">
    <property type="entry name" value="RSMI"/>
    <property type="match status" value="1"/>
</dbReference>
<organism>
    <name type="scientific">Buchnera aphidicola subsp. Schizaphis graminum (strain Sg)</name>
    <dbReference type="NCBI Taxonomy" id="198804"/>
    <lineage>
        <taxon>Bacteria</taxon>
        <taxon>Pseudomonadati</taxon>
        <taxon>Pseudomonadota</taxon>
        <taxon>Gammaproteobacteria</taxon>
        <taxon>Enterobacterales</taxon>
        <taxon>Erwiniaceae</taxon>
        <taxon>Buchnera</taxon>
    </lineage>
</organism>
<gene>
    <name evidence="1" type="primary">rsmI</name>
    <name type="ordered locus">BUsg_083</name>
</gene>
<reference key="1">
    <citation type="journal article" date="2002" name="Science">
        <title>50 million years of genomic stasis in endosymbiotic bacteria.</title>
        <authorList>
            <person name="Tamas I."/>
            <person name="Klasson L."/>
            <person name="Canbaeck B."/>
            <person name="Naeslund A.K."/>
            <person name="Eriksson A.-S."/>
            <person name="Wernegreen J.J."/>
            <person name="Sandstroem J.P."/>
            <person name="Moran N.A."/>
            <person name="Andersson S.G.E."/>
        </authorList>
    </citation>
    <scope>NUCLEOTIDE SEQUENCE [LARGE SCALE GENOMIC DNA]</scope>
    <source>
        <strain>Sg</strain>
    </source>
</reference>
<name>RSMI_BUCAP</name>
<feature type="chain" id="PRO_0000211936" description="Ribosomal RNA small subunit methyltransferase I">
    <location>
        <begin position="1"/>
        <end position="285"/>
    </location>
</feature>
<sequence length="285" mass="32629">MNSLNKTGLLYIVPTPIGNLSDITYRAVETLKNVNLIAAENIHHTNILLQHYNVKNILISLNKNNEKKQSDYVINELKKGKKIALVSDAGTPVINDPGYFLVKKCCFLNIKIIPLPGPCAAITALSASGISTNRFCYEGFLPSKKKIRRDLLKSLKKEIRTIIFYESKHRILESIKDIIETIDENRYLVIAREITKKWEYIYGAKANIILSWLKEDQSRYKKGEIVIIIDGFKELKNKDISAKAINTLTILRNFLSLKQSVFITSKIHKIKKNDLYQHAIKEKDK</sequence>
<proteinExistence type="inferred from homology"/>
<accession>Q8KA29</accession>
<comment type="function">
    <text evidence="1">Catalyzes the 2'-O-methylation of the ribose of cytidine 1402 (C1402) in 16S rRNA.</text>
</comment>
<comment type="catalytic activity">
    <reaction evidence="1">
        <text>cytidine(1402) in 16S rRNA + S-adenosyl-L-methionine = 2'-O-methylcytidine(1402) in 16S rRNA + S-adenosyl-L-homocysteine + H(+)</text>
        <dbReference type="Rhea" id="RHEA:42924"/>
        <dbReference type="Rhea" id="RHEA-COMP:10285"/>
        <dbReference type="Rhea" id="RHEA-COMP:10286"/>
        <dbReference type="ChEBI" id="CHEBI:15378"/>
        <dbReference type="ChEBI" id="CHEBI:57856"/>
        <dbReference type="ChEBI" id="CHEBI:59789"/>
        <dbReference type="ChEBI" id="CHEBI:74495"/>
        <dbReference type="ChEBI" id="CHEBI:82748"/>
        <dbReference type="EC" id="2.1.1.198"/>
    </reaction>
</comment>
<comment type="subcellular location">
    <subcellularLocation>
        <location evidence="1">Cytoplasm</location>
    </subcellularLocation>
</comment>
<comment type="similarity">
    <text evidence="1">Belongs to the methyltransferase superfamily. RsmI family.</text>
</comment>
<protein>
    <recommendedName>
        <fullName evidence="1">Ribosomal RNA small subunit methyltransferase I</fullName>
        <ecNumber evidence="1">2.1.1.198</ecNumber>
    </recommendedName>
    <alternativeName>
        <fullName evidence="1">16S rRNA 2'-O-ribose C1402 methyltransferase</fullName>
    </alternativeName>
    <alternativeName>
        <fullName evidence="1">rRNA (cytidine-2'-O-)-methyltransferase RsmI</fullName>
    </alternativeName>
</protein>
<evidence type="ECO:0000255" key="1">
    <source>
        <dbReference type="HAMAP-Rule" id="MF_01877"/>
    </source>
</evidence>